<organism>
    <name type="scientific">Homo sapiens</name>
    <name type="common">Human</name>
    <dbReference type="NCBI Taxonomy" id="9606"/>
    <lineage>
        <taxon>Eukaryota</taxon>
        <taxon>Metazoa</taxon>
        <taxon>Chordata</taxon>
        <taxon>Craniata</taxon>
        <taxon>Vertebrata</taxon>
        <taxon>Euteleostomi</taxon>
        <taxon>Mammalia</taxon>
        <taxon>Eutheria</taxon>
        <taxon>Euarchontoglires</taxon>
        <taxon>Primates</taxon>
        <taxon>Haplorrhini</taxon>
        <taxon>Catarrhini</taxon>
        <taxon>Hominidae</taxon>
        <taxon>Homo</taxon>
    </lineage>
</organism>
<proteinExistence type="evidence at protein level"/>
<keyword id="KW-0025">Alternative splicing</keyword>
<keyword id="KW-0963">Cytoplasm</keyword>
<keyword id="KW-0217">Developmental protein</keyword>
<keyword id="KW-0221">Differentiation</keyword>
<keyword id="KW-0238">DNA-binding</keyword>
<keyword id="KW-0524">Neurogenesis</keyword>
<keyword id="KW-0539">Nucleus</keyword>
<keyword id="KW-1267">Proteomics identification</keyword>
<keyword id="KW-1185">Reference proteome</keyword>
<keyword id="KW-0804">Transcription</keyword>
<keyword id="KW-0805">Transcription regulation</keyword>
<sequence length="321" mass="34644">MKHIPVLEDGPWKTVCVKELNGLKKLKRKGKEPARRANGYKTFRLDLEAPEPRAVATNGLRDRTHRLQPVPVPVPVPVPVAPAVPPRGGTDTAGERGGSRAPEVSDARKRCFALGAVGPGLPTPPPPPPPAPQSQAPGGPEAQPFREPGLRPRILLCAPPARPAPSAPPAPPAPPESTVRPAPPTRPGESSYSSISHVIYNNHQDSSASPRKRPGEATAASSEIKALQQTRRLLANARERTRVHTISAAFEALRKQVPCYSYGQKLSKLAILRIACNYILSLARLADLDYSADHSNLSFSECVQRCTRTLQAEGRAKKRKE</sequence>
<name>ATOH8_HUMAN</name>
<protein>
    <recommendedName>
        <fullName evidence="11">Transcription factor ATOH8</fullName>
    </recommendedName>
    <alternativeName>
        <fullName evidence="13">Class A basic helix-loop-helix protein 21</fullName>
        <shortName evidence="13">bHLHa21</shortName>
    </alternativeName>
    <alternativeName>
        <fullName evidence="12">Helix-loop-helix protein hATH-6</fullName>
        <shortName evidence="10">hATH6</shortName>
    </alternativeName>
    <alternativeName>
        <fullName evidence="13">Protein atonal homolog 8</fullName>
    </alternativeName>
</protein>
<reference key="1">
    <citation type="journal article" date="2002" name="Physiol. Genomics">
        <title>Gene expression profile of human endothelial cells exposed to sustained fluid shear stress.</title>
        <authorList>
            <person name="Wasserman S.M."/>
            <person name="Mehraban F."/>
            <person name="Komuves L.G."/>
            <person name="Yang R.B."/>
            <person name="Tomlinson J.E."/>
            <person name="Zhang Y."/>
            <person name="Spriggs F."/>
            <person name="Topper J.N."/>
        </authorList>
    </citation>
    <scope>NUCLEOTIDE SEQUENCE [MRNA] (ISOFORM 1)</scope>
    <scope>VARIANT PRO-150</scope>
    <scope>TISSUE SPECIFICITY</scope>
    <source>
        <tissue>Umbilical vein</tissue>
    </source>
</reference>
<reference key="2">
    <citation type="journal article" date="2004" name="Nat. Genet.">
        <title>Complete sequencing and characterization of 21,243 full-length human cDNAs.</title>
        <authorList>
            <person name="Ota T."/>
            <person name="Suzuki Y."/>
            <person name="Nishikawa T."/>
            <person name="Otsuki T."/>
            <person name="Sugiyama T."/>
            <person name="Irie R."/>
            <person name="Wakamatsu A."/>
            <person name="Hayashi K."/>
            <person name="Sato H."/>
            <person name="Nagai K."/>
            <person name="Kimura K."/>
            <person name="Makita H."/>
            <person name="Sekine M."/>
            <person name="Obayashi M."/>
            <person name="Nishi T."/>
            <person name="Shibahara T."/>
            <person name="Tanaka T."/>
            <person name="Ishii S."/>
            <person name="Yamamoto J."/>
            <person name="Saito K."/>
            <person name="Kawai Y."/>
            <person name="Isono Y."/>
            <person name="Nakamura Y."/>
            <person name="Nagahari K."/>
            <person name="Murakami K."/>
            <person name="Yasuda T."/>
            <person name="Iwayanagi T."/>
            <person name="Wagatsuma M."/>
            <person name="Shiratori A."/>
            <person name="Sudo H."/>
            <person name="Hosoiri T."/>
            <person name="Kaku Y."/>
            <person name="Kodaira H."/>
            <person name="Kondo H."/>
            <person name="Sugawara M."/>
            <person name="Takahashi M."/>
            <person name="Kanda K."/>
            <person name="Yokoi T."/>
            <person name="Furuya T."/>
            <person name="Kikkawa E."/>
            <person name="Omura Y."/>
            <person name="Abe K."/>
            <person name="Kamihara K."/>
            <person name="Katsuta N."/>
            <person name="Sato K."/>
            <person name="Tanikawa M."/>
            <person name="Yamazaki M."/>
            <person name="Ninomiya K."/>
            <person name="Ishibashi T."/>
            <person name="Yamashita H."/>
            <person name="Murakawa K."/>
            <person name="Fujimori K."/>
            <person name="Tanai H."/>
            <person name="Kimata M."/>
            <person name="Watanabe M."/>
            <person name="Hiraoka S."/>
            <person name="Chiba Y."/>
            <person name="Ishida S."/>
            <person name="Ono Y."/>
            <person name="Takiguchi S."/>
            <person name="Watanabe S."/>
            <person name="Yosida M."/>
            <person name="Hotuta T."/>
            <person name="Kusano J."/>
            <person name="Kanehori K."/>
            <person name="Takahashi-Fujii A."/>
            <person name="Hara H."/>
            <person name="Tanase T.-O."/>
            <person name="Nomura Y."/>
            <person name="Togiya S."/>
            <person name="Komai F."/>
            <person name="Hara R."/>
            <person name="Takeuchi K."/>
            <person name="Arita M."/>
            <person name="Imose N."/>
            <person name="Musashino K."/>
            <person name="Yuuki H."/>
            <person name="Oshima A."/>
            <person name="Sasaki N."/>
            <person name="Aotsuka S."/>
            <person name="Yoshikawa Y."/>
            <person name="Matsunawa H."/>
            <person name="Ichihara T."/>
            <person name="Shiohata N."/>
            <person name="Sano S."/>
            <person name="Moriya S."/>
            <person name="Momiyama H."/>
            <person name="Satoh N."/>
            <person name="Takami S."/>
            <person name="Terashima Y."/>
            <person name="Suzuki O."/>
            <person name="Nakagawa S."/>
            <person name="Senoh A."/>
            <person name="Mizoguchi H."/>
            <person name="Goto Y."/>
            <person name="Shimizu F."/>
            <person name="Wakebe H."/>
            <person name="Hishigaki H."/>
            <person name="Watanabe T."/>
            <person name="Sugiyama A."/>
            <person name="Takemoto M."/>
            <person name="Kawakami B."/>
            <person name="Yamazaki M."/>
            <person name="Watanabe K."/>
            <person name="Kumagai A."/>
            <person name="Itakura S."/>
            <person name="Fukuzumi Y."/>
            <person name="Fujimori Y."/>
            <person name="Komiyama M."/>
            <person name="Tashiro H."/>
            <person name="Tanigami A."/>
            <person name="Fujiwara T."/>
            <person name="Ono T."/>
            <person name="Yamada K."/>
            <person name="Fujii Y."/>
            <person name="Ozaki K."/>
            <person name="Hirao M."/>
            <person name="Ohmori Y."/>
            <person name="Kawabata A."/>
            <person name="Hikiji T."/>
            <person name="Kobatake N."/>
            <person name="Inagaki H."/>
            <person name="Ikema Y."/>
            <person name="Okamoto S."/>
            <person name="Okitani R."/>
            <person name="Kawakami T."/>
            <person name="Noguchi S."/>
            <person name="Itoh T."/>
            <person name="Shigeta K."/>
            <person name="Senba T."/>
            <person name="Matsumura K."/>
            <person name="Nakajima Y."/>
            <person name="Mizuno T."/>
            <person name="Morinaga M."/>
            <person name="Sasaki M."/>
            <person name="Togashi T."/>
            <person name="Oyama M."/>
            <person name="Hata H."/>
            <person name="Watanabe M."/>
            <person name="Komatsu T."/>
            <person name="Mizushima-Sugano J."/>
            <person name="Satoh T."/>
            <person name="Shirai Y."/>
            <person name="Takahashi Y."/>
            <person name="Nakagawa K."/>
            <person name="Okumura K."/>
            <person name="Nagase T."/>
            <person name="Nomura N."/>
            <person name="Kikuchi H."/>
            <person name="Masuho Y."/>
            <person name="Yamashita R."/>
            <person name="Nakai K."/>
            <person name="Yada T."/>
            <person name="Nakamura Y."/>
            <person name="Ohara O."/>
            <person name="Isogai T."/>
            <person name="Sugano S."/>
        </authorList>
    </citation>
    <scope>NUCLEOTIDE SEQUENCE [LARGE SCALE MRNA] (ISOFORM 1)</scope>
    <scope>VARIANT PRO-150</scope>
</reference>
<reference key="3">
    <citation type="journal article" date="2005" name="Nature">
        <title>Generation and annotation of the DNA sequences of human chromosomes 2 and 4.</title>
        <authorList>
            <person name="Hillier L.W."/>
            <person name="Graves T.A."/>
            <person name="Fulton R.S."/>
            <person name="Fulton L.A."/>
            <person name="Pepin K.H."/>
            <person name="Minx P."/>
            <person name="Wagner-McPherson C."/>
            <person name="Layman D."/>
            <person name="Wylie K."/>
            <person name="Sekhon M."/>
            <person name="Becker M.C."/>
            <person name="Fewell G.A."/>
            <person name="Delehaunty K.D."/>
            <person name="Miner T.L."/>
            <person name="Nash W.E."/>
            <person name="Kremitzki C."/>
            <person name="Oddy L."/>
            <person name="Du H."/>
            <person name="Sun H."/>
            <person name="Bradshaw-Cordum H."/>
            <person name="Ali J."/>
            <person name="Carter J."/>
            <person name="Cordes M."/>
            <person name="Harris A."/>
            <person name="Isak A."/>
            <person name="van Brunt A."/>
            <person name="Nguyen C."/>
            <person name="Du F."/>
            <person name="Courtney L."/>
            <person name="Kalicki J."/>
            <person name="Ozersky P."/>
            <person name="Abbott S."/>
            <person name="Armstrong J."/>
            <person name="Belter E.A."/>
            <person name="Caruso L."/>
            <person name="Cedroni M."/>
            <person name="Cotton M."/>
            <person name="Davidson T."/>
            <person name="Desai A."/>
            <person name="Elliott G."/>
            <person name="Erb T."/>
            <person name="Fronick C."/>
            <person name="Gaige T."/>
            <person name="Haakenson W."/>
            <person name="Haglund K."/>
            <person name="Holmes A."/>
            <person name="Harkins R."/>
            <person name="Kim K."/>
            <person name="Kruchowski S.S."/>
            <person name="Strong C.M."/>
            <person name="Grewal N."/>
            <person name="Goyea E."/>
            <person name="Hou S."/>
            <person name="Levy A."/>
            <person name="Martinka S."/>
            <person name="Mead K."/>
            <person name="McLellan M.D."/>
            <person name="Meyer R."/>
            <person name="Randall-Maher J."/>
            <person name="Tomlinson C."/>
            <person name="Dauphin-Kohlberg S."/>
            <person name="Kozlowicz-Reilly A."/>
            <person name="Shah N."/>
            <person name="Swearengen-Shahid S."/>
            <person name="Snider J."/>
            <person name="Strong J.T."/>
            <person name="Thompson J."/>
            <person name="Yoakum M."/>
            <person name="Leonard S."/>
            <person name="Pearman C."/>
            <person name="Trani L."/>
            <person name="Radionenko M."/>
            <person name="Waligorski J.E."/>
            <person name="Wang C."/>
            <person name="Rock S.M."/>
            <person name="Tin-Wollam A.-M."/>
            <person name="Maupin R."/>
            <person name="Latreille P."/>
            <person name="Wendl M.C."/>
            <person name="Yang S.-P."/>
            <person name="Pohl C."/>
            <person name="Wallis J.W."/>
            <person name="Spieth J."/>
            <person name="Bieri T.A."/>
            <person name="Berkowicz N."/>
            <person name="Nelson J.O."/>
            <person name="Osborne J."/>
            <person name="Ding L."/>
            <person name="Meyer R."/>
            <person name="Sabo A."/>
            <person name="Shotland Y."/>
            <person name="Sinha P."/>
            <person name="Wohldmann P.E."/>
            <person name="Cook L.L."/>
            <person name="Hickenbotham M.T."/>
            <person name="Eldred J."/>
            <person name="Williams D."/>
            <person name="Jones T.A."/>
            <person name="She X."/>
            <person name="Ciccarelli F.D."/>
            <person name="Izaurralde E."/>
            <person name="Taylor J."/>
            <person name="Schmutz J."/>
            <person name="Myers R.M."/>
            <person name="Cox D.R."/>
            <person name="Huang X."/>
            <person name="McPherson J.D."/>
            <person name="Mardis E.R."/>
            <person name="Clifton S.W."/>
            <person name="Warren W.C."/>
            <person name="Chinwalla A.T."/>
            <person name="Eddy S.R."/>
            <person name="Marra M.A."/>
            <person name="Ovcharenko I."/>
            <person name="Furey T.S."/>
            <person name="Miller W."/>
            <person name="Eichler E.E."/>
            <person name="Bork P."/>
            <person name="Suyama M."/>
            <person name="Torrents D."/>
            <person name="Waterston R.H."/>
            <person name="Wilson R.K."/>
        </authorList>
    </citation>
    <scope>NUCLEOTIDE SEQUENCE [LARGE SCALE GENOMIC DNA]</scope>
</reference>
<reference key="4">
    <citation type="journal article" date="2004" name="Genome Res.">
        <title>The status, quality, and expansion of the NIH full-length cDNA project: the Mammalian Gene Collection (MGC).</title>
        <authorList>
            <consortium name="The MGC Project Team"/>
        </authorList>
    </citation>
    <scope>NUCLEOTIDE SEQUENCE [LARGE SCALE MRNA] (ISOFORM 1)</scope>
    <scope>VARIANT PRO-150</scope>
    <source>
        <tissue>Muscle</tissue>
        <tissue>Retinal pigment epithelium</tissue>
    </source>
</reference>
<reference key="5">
    <citation type="journal article" date="2007" name="BMC Genomics">
        <title>The full-ORF clone resource of the German cDNA consortium.</title>
        <authorList>
            <person name="Bechtel S."/>
            <person name="Rosenfelder H."/>
            <person name="Duda A."/>
            <person name="Schmidt C.P."/>
            <person name="Ernst U."/>
            <person name="Wellenreuther R."/>
            <person name="Mehrle A."/>
            <person name="Schuster C."/>
            <person name="Bahr A."/>
            <person name="Bloecker H."/>
            <person name="Heubner D."/>
            <person name="Hoerlein A."/>
            <person name="Michel G."/>
            <person name="Wedler H."/>
            <person name="Koehrer K."/>
            <person name="Ottenwaelder B."/>
            <person name="Poustka A."/>
            <person name="Wiemann S."/>
            <person name="Schupp I."/>
        </authorList>
    </citation>
    <scope>NUCLEOTIDE SEQUENCE [LARGE SCALE MRNA] OF 154-321 (ISOFORM 2)</scope>
    <source>
        <tissue>Amygdala</tissue>
    </source>
</reference>
<reference key="6">
    <citation type="journal article" date="2014" name="Br. J. Haematol.">
        <title>The transcription factor ATOH8 is regulated by erythropoietic activity and regulates HAMP transcription and cellular pSMAD1,5,8 levels.</title>
        <authorList>
            <person name="Patel N."/>
            <person name="Varghese J."/>
            <person name="Masaratana P."/>
            <person name="Latunde-Dada G.O."/>
            <person name="Jacob M."/>
            <person name="Simpson R.J."/>
            <person name="McKie A.T."/>
        </authorList>
    </citation>
    <scope>FUNCTION</scope>
</reference>
<reference key="7">
    <citation type="journal article" date="2014" name="J. Cell Sci.">
        <title>The role of Hath6, a newly identified shear-stress-responsive transcription factor, in endothelial cell differentiation and function.</title>
        <authorList>
            <person name="Fang F."/>
            <person name="Wasserman S.M."/>
            <person name="Torres-Vazquez J."/>
            <person name="Weinstein B."/>
            <person name="Cao F."/>
            <person name="Li Z."/>
            <person name="Wilson K.D."/>
            <person name="Yue W."/>
            <person name="Wu J.C."/>
            <person name="Xie X."/>
            <person name="Pei X."/>
        </authorList>
    </citation>
    <scope>FUNCTION</scope>
    <scope>SUBCELLULAR LOCATION</scope>
</reference>
<dbReference type="EMBL" id="AF529205">
    <property type="protein sequence ID" value="AAO85773.1"/>
    <property type="molecule type" value="mRNA"/>
</dbReference>
<dbReference type="EMBL" id="AK027614">
    <property type="protein sequence ID" value="BAB55233.1"/>
    <property type="molecule type" value="mRNA"/>
</dbReference>
<dbReference type="EMBL" id="AK074681">
    <property type="protein sequence ID" value="BAC11135.1"/>
    <property type="molecule type" value="mRNA"/>
</dbReference>
<dbReference type="EMBL" id="AC012454">
    <property type="status" value="NOT_ANNOTATED_CDS"/>
    <property type="molecule type" value="Genomic_DNA"/>
</dbReference>
<dbReference type="EMBL" id="BC021207">
    <property type="protein sequence ID" value="AAH21207.1"/>
    <property type="molecule type" value="mRNA"/>
</dbReference>
<dbReference type="EMBL" id="BC094832">
    <property type="protein sequence ID" value="AAH94832.1"/>
    <property type="molecule type" value="mRNA"/>
</dbReference>
<dbReference type="EMBL" id="AL831857">
    <property type="protein sequence ID" value="CAH56263.1"/>
    <property type="molecule type" value="mRNA"/>
</dbReference>
<dbReference type="CCDS" id="CCDS1985.1">
    <molecule id="Q96SQ7-1"/>
</dbReference>
<dbReference type="RefSeq" id="NP_116216.2">
    <molecule id="Q96SQ7-1"/>
    <property type="nucleotide sequence ID" value="NM_032827.7"/>
</dbReference>
<dbReference type="SMR" id="Q96SQ7"/>
<dbReference type="BioGRID" id="124350">
    <property type="interactions" value="3"/>
</dbReference>
<dbReference type="FunCoup" id="Q96SQ7">
    <property type="interactions" value="1235"/>
</dbReference>
<dbReference type="IntAct" id="Q96SQ7">
    <property type="interactions" value="3"/>
</dbReference>
<dbReference type="STRING" id="9606.ENSP00000304676"/>
<dbReference type="iPTMnet" id="Q96SQ7"/>
<dbReference type="PhosphoSitePlus" id="Q96SQ7"/>
<dbReference type="BioMuta" id="ATOH8"/>
<dbReference type="DMDM" id="224471820"/>
<dbReference type="MassIVE" id="Q96SQ7"/>
<dbReference type="PaxDb" id="9606-ENSP00000304676"/>
<dbReference type="PeptideAtlas" id="Q96SQ7"/>
<dbReference type="ProteomicsDB" id="78136">
    <molecule id="Q96SQ7-1"/>
</dbReference>
<dbReference type="ProteomicsDB" id="78137">
    <molecule id="Q96SQ7-2"/>
</dbReference>
<dbReference type="Antibodypedia" id="17011">
    <property type="antibodies" value="132 antibodies from 26 providers"/>
</dbReference>
<dbReference type="DNASU" id="84913"/>
<dbReference type="Ensembl" id="ENST00000306279.4">
    <molecule id="Q96SQ7-1"/>
    <property type="protein sequence ID" value="ENSP00000304676.3"/>
    <property type="gene ID" value="ENSG00000168874.14"/>
</dbReference>
<dbReference type="Ensembl" id="ENST00000716557.1">
    <molecule id="Q96SQ7-1"/>
    <property type="protein sequence ID" value="ENSP00000520563.1"/>
    <property type="gene ID" value="ENSG00000168874.14"/>
</dbReference>
<dbReference type="GeneID" id="84913"/>
<dbReference type="KEGG" id="hsa:84913"/>
<dbReference type="MANE-Select" id="ENST00000306279.4">
    <property type="protein sequence ID" value="ENSP00000304676.3"/>
    <property type="RefSeq nucleotide sequence ID" value="NM_032827.7"/>
    <property type="RefSeq protein sequence ID" value="NP_116216.2"/>
</dbReference>
<dbReference type="UCSC" id="uc002sqn.4">
    <molecule id="Q96SQ7-1"/>
    <property type="organism name" value="human"/>
</dbReference>
<dbReference type="AGR" id="HGNC:24126"/>
<dbReference type="CTD" id="84913"/>
<dbReference type="DisGeNET" id="84913"/>
<dbReference type="GeneCards" id="ATOH8"/>
<dbReference type="HGNC" id="HGNC:24126">
    <property type="gene designation" value="ATOH8"/>
</dbReference>
<dbReference type="HPA" id="ENSG00000168874">
    <property type="expression patterns" value="Tissue enhanced (skeletal)"/>
</dbReference>
<dbReference type="MIM" id="619820">
    <property type="type" value="gene"/>
</dbReference>
<dbReference type="neXtProt" id="NX_Q96SQ7"/>
<dbReference type="OpenTargets" id="ENSG00000168874"/>
<dbReference type="PharmGKB" id="PA134904746"/>
<dbReference type="VEuPathDB" id="HostDB:ENSG00000168874"/>
<dbReference type="eggNOG" id="KOG3898">
    <property type="taxonomic scope" value="Eukaryota"/>
</dbReference>
<dbReference type="GeneTree" id="ENSGT00940000161151"/>
<dbReference type="HOGENOM" id="CLU_057987_0_0_1"/>
<dbReference type="InParanoid" id="Q96SQ7"/>
<dbReference type="OMA" id="RSWKPVC"/>
<dbReference type="OrthoDB" id="10001938at2759"/>
<dbReference type="PAN-GO" id="Q96SQ7">
    <property type="GO annotations" value="5 GO annotations based on evolutionary models"/>
</dbReference>
<dbReference type="PhylomeDB" id="Q96SQ7"/>
<dbReference type="TreeFam" id="TF324848"/>
<dbReference type="PathwayCommons" id="Q96SQ7"/>
<dbReference type="SignaLink" id="Q96SQ7"/>
<dbReference type="BioGRID-ORCS" id="84913">
    <property type="hits" value="14 hits in 1167 CRISPR screens"/>
</dbReference>
<dbReference type="CD-CODE" id="804901D1">
    <property type="entry name" value="Nuclear speckle"/>
</dbReference>
<dbReference type="GenomeRNAi" id="84913"/>
<dbReference type="Pharos" id="Q96SQ7">
    <property type="development level" value="Tbio"/>
</dbReference>
<dbReference type="PRO" id="PR:Q96SQ7"/>
<dbReference type="Proteomes" id="UP000005640">
    <property type="component" value="Chromosome 2"/>
</dbReference>
<dbReference type="RNAct" id="Q96SQ7">
    <property type="molecule type" value="protein"/>
</dbReference>
<dbReference type="Bgee" id="ENSG00000168874">
    <property type="expression patterns" value="Expressed in right lobe of thyroid gland and 163 other cell types or tissues"/>
</dbReference>
<dbReference type="GO" id="GO:0000785">
    <property type="term" value="C:chromatin"/>
    <property type="evidence" value="ECO:0000247"/>
    <property type="project" value="NTNU_SB"/>
</dbReference>
<dbReference type="GO" id="GO:0005737">
    <property type="term" value="C:cytoplasm"/>
    <property type="evidence" value="ECO:0000250"/>
    <property type="project" value="UniProtKB"/>
</dbReference>
<dbReference type="GO" id="GO:0016607">
    <property type="term" value="C:nuclear speck"/>
    <property type="evidence" value="ECO:0007669"/>
    <property type="project" value="UniProtKB-SubCell"/>
</dbReference>
<dbReference type="GO" id="GO:0005654">
    <property type="term" value="C:nucleoplasm"/>
    <property type="evidence" value="ECO:0000314"/>
    <property type="project" value="HPA"/>
</dbReference>
<dbReference type="GO" id="GO:0005634">
    <property type="term" value="C:nucleus"/>
    <property type="evidence" value="ECO:0000314"/>
    <property type="project" value="UniProtKB"/>
</dbReference>
<dbReference type="GO" id="GO:0003700">
    <property type="term" value="F:DNA-binding transcription factor activity"/>
    <property type="evidence" value="ECO:0000314"/>
    <property type="project" value="UniProtKB"/>
</dbReference>
<dbReference type="GO" id="GO:0000981">
    <property type="term" value="F:DNA-binding transcription factor activity, RNA polymerase II-specific"/>
    <property type="evidence" value="ECO:0000247"/>
    <property type="project" value="NTNU_SB"/>
</dbReference>
<dbReference type="GO" id="GO:0140297">
    <property type="term" value="F:DNA-binding transcription factor binding"/>
    <property type="evidence" value="ECO:0007669"/>
    <property type="project" value="Ensembl"/>
</dbReference>
<dbReference type="GO" id="GO:0070888">
    <property type="term" value="F:E-box binding"/>
    <property type="evidence" value="ECO:0000314"/>
    <property type="project" value="UniProtKB"/>
</dbReference>
<dbReference type="GO" id="GO:0046983">
    <property type="term" value="F:protein dimerization activity"/>
    <property type="evidence" value="ECO:0007669"/>
    <property type="project" value="InterPro"/>
</dbReference>
<dbReference type="GO" id="GO:0009653">
    <property type="term" value="P:anatomical structure morphogenesis"/>
    <property type="evidence" value="ECO:0000318"/>
    <property type="project" value="GO_Central"/>
</dbReference>
<dbReference type="GO" id="GO:0030154">
    <property type="term" value="P:cell differentiation"/>
    <property type="evidence" value="ECO:0007669"/>
    <property type="project" value="UniProtKB-KW"/>
</dbReference>
<dbReference type="GO" id="GO:0001704">
    <property type="term" value="P:formation of primary germ layer"/>
    <property type="evidence" value="ECO:0000250"/>
    <property type="project" value="UniProtKB"/>
</dbReference>
<dbReference type="GO" id="GO:0051450">
    <property type="term" value="P:myoblast proliferation"/>
    <property type="evidence" value="ECO:0000250"/>
    <property type="project" value="UniProtKB"/>
</dbReference>
<dbReference type="GO" id="GO:0045892">
    <property type="term" value="P:negative regulation of DNA-templated transcription"/>
    <property type="evidence" value="ECO:0000250"/>
    <property type="project" value="UniProtKB"/>
</dbReference>
<dbReference type="GO" id="GO:0001937">
    <property type="term" value="P:negative regulation of endothelial cell proliferation"/>
    <property type="evidence" value="ECO:0000315"/>
    <property type="project" value="UniProtKB"/>
</dbReference>
<dbReference type="GO" id="GO:0010629">
    <property type="term" value="P:negative regulation of gene expression"/>
    <property type="evidence" value="ECO:0000315"/>
    <property type="project" value="BHF-UCL"/>
</dbReference>
<dbReference type="GO" id="GO:0007399">
    <property type="term" value="P:nervous system development"/>
    <property type="evidence" value="ECO:0007669"/>
    <property type="project" value="UniProtKB-KW"/>
</dbReference>
<dbReference type="GO" id="GO:0045893">
    <property type="term" value="P:positive regulation of DNA-templated transcription"/>
    <property type="evidence" value="ECO:0000314"/>
    <property type="project" value="UniProtKB"/>
</dbReference>
<dbReference type="GO" id="GO:0045603">
    <property type="term" value="P:positive regulation of endothelial cell differentiation"/>
    <property type="evidence" value="ECO:0000314"/>
    <property type="project" value="UniProtKB"/>
</dbReference>
<dbReference type="GO" id="GO:0010595">
    <property type="term" value="P:positive regulation of endothelial cell migration"/>
    <property type="evidence" value="ECO:0000315"/>
    <property type="project" value="UniProtKB"/>
</dbReference>
<dbReference type="GO" id="GO:1902895">
    <property type="term" value="P:positive regulation of miRNA transcription"/>
    <property type="evidence" value="ECO:0000316"/>
    <property type="project" value="BHF-UCL"/>
</dbReference>
<dbReference type="GO" id="GO:0060391">
    <property type="term" value="P:positive regulation of SMAD protein signal transduction"/>
    <property type="evidence" value="ECO:0000314"/>
    <property type="project" value="UniProtKB"/>
</dbReference>
<dbReference type="GO" id="GO:0045944">
    <property type="term" value="P:positive regulation of transcription by RNA polymerase II"/>
    <property type="evidence" value="ECO:0000318"/>
    <property type="project" value="GO_Central"/>
</dbReference>
<dbReference type="GO" id="GO:0035148">
    <property type="term" value="P:tube formation"/>
    <property type="evidence" value="ECO:0000315"/>
    <property type="project" value="UniProtKB"/>
</dbReference>
<dbReference type="CDD" id="cd11421">
    <property type="entry name" value="bHLH_TS_ATOH8"/>
    <property type="match status" value="1"/>
</dbReference>
<dbReference type="FunFam" id="4.10.280.10:FF:000052">
    <property type="entry name" value="Protein atonal homolog 8"/>
    <property type="match status" value="1"/>
</dbReference>
<dbReference type="Gene3D" id="4.10.280.10">
    <property type="entry name" value="Helix-loop-helix DNA-binding domain"/>
    <property type="match status" value="1"/>
</dbReference>
<dbReference type="InterPro" id="IPR032660">
    <property type="entry name" value="ATOH8_bHLH"/>
</dbReference>
<dbReference type="InterPro" id="IPR011598">
    <property type="entry name" value="bHLH_dom"/>
</dbReference>
<dbReference type="InterPro" id="IPR050359">
    <property type="entry name" value="bHLH_transcription_factors"/>
</dbReference>
<dbReference type="InterPro" id="IPR036638">
    <property type="entry name" value="HLH_DNA-bd_sf"/>
</dbReference>
<dbReference type="PANTHER" id="PTHR19290">
    <property type="entry name" value="BASIC HELIX-LOOP-HELIX PROTEIN NEUROGENIN-RELATED"/>
    <property type="match status" value="1"/>
</dbReference>
<dbReference type="PANTHER" id="PTHR19290:SF102">
    <property type="entry name" value="TRANSCRIPTION FACTOR ATOH8"/>
    <property type="match status" value="1"/>
</dbReference>
<dbReference type="Pfam" id="PF00010">
    <property type="entry name" value="HLH"/>
    <property type="match status" value="1"/>
</dbReference>
<dbReference type="SMART" id="SM00353">
    <property type="entry name" value="HLH"/>
    <property type="match status" value="1"/>
</dbReference>
<dbReference type="SUPFAM" id="SSF47459">
    <property type="entry name" value="HLH, helix-loop-helix DNA-binding domain"/>
    <property type="match status" value="1"/>
</dbReference>
<dbReference type="PROSITE" id="PS50888">
    <property type="entry name" value="BHLH"/>
    <property type="match status" value="1"/>
</dbReference>
<comment type="function">
    <text evidence="1 7 8">Transcription factor that binds a palindromic (canonical) core consensus DNA sequence 5'-CANNTG- 3' known as an E-box element, possibly as a heterodimer with other bHLH proteins (PubMed:24236640). Regulates endothelial cell proliferation, migration and tube-like structures formation (PubMed:24463812). Modulates endothelial cell differentiation through NOS3 (PubMed:24463812). May be implicated in specification and differentiation of neuronal cell lineages in the brain (By similarity). May participate in kidney development and may be involved in podocyte differentiation (By similarity). During early embryonic development is involved in tissue-specific differentiation processes that are dependent on class II bHLH factors and namely modulates the differentiation program initiated by the pro-endocrine factor NEUROG3 (By similarity). During myogenesis, may play a role during the transition of myoblasts from the proliferative phase to the differentiation phase (By similarity). Positively regulates HAMP transcription in two ways, firstly by acting directly on the HAMP promoter via E-boxes binding and indirectly through increased phosphorylation of SMAD protein complex (PubMed:24236640). Repress NEUROG3-dependent gene activation in a gene-specific manner through at least two mechanisms; requires only either the sequestering of a general partner such as TCF3 through heterodimerization, either also requires binding of the bHLH domain to DNA via a basic motif (By similarity).</text>
</comment>
<comment type="subunit">
    <text evidence="1">Efficient DNA binding requires dimerization with another bHLH protein. Interacts with NEUROG3 and NEUROD1. Interacts with ZFPM2; mediates indirect interaction with GATA4. Forms a heterodimer with TCF3; repress transcription of TCF3 and TCF3/NEUROG3 dimer-induced transactivation of E box-dependent promoters.</text>
</comment>
<comment type="interaction">
    <interactant intactId="EBI-26429573">
        <id>Q96SQ7-1</id>
    </interactant>
    <interactant intactId="EBI-26442038">
        <id>P16298-4</id>
        <label>PPP3CB</label>
    </interactant>
    <organismsDiffer>false</organismsDiffer>
    <experiments>5</experiments>
</comment>
<comment type="subcellular location">
    <subcellularLocation>
        <location evidence="8">Nucleus</location>
    </subcellularLocation>
    <subcellularLocation>
        <location evidence="8">Nucleus speckle</location>
    </subcellularLocation>
    <subcellularLocation>
        <location evidence="1">Cytoplasm</location>
    </subcellularLocation>
</comment>
<comment type="alternative products">
    <event type="alternative splicing"/>
    <isoform>
        <id>Q96SQ7-1</id>
        <name>1</name>
        <sequence type="displayed"/>
    </isoform>
    <isoform>
        <id>Q96SQ7-2</id>
        <name>2</name>
        <sequence type="described" ref="VSP_032118"/>
    </isoform>
</comment>
<comment type="tissue specificity">
    <text evidence="4">Expressed in lung, liver, kidney, heart and pancreas. Expressed in endothel of umbilical vessels.</text>
</comment>
<comment type="domain">
    <text evidence="1">The bHLH domain mediates transcriptional repression by inhibiting TCF3 transcriptional activity through heterodimerization.</text>
</comment>
<comment type="caution">
    <text evidence="2">Contains a degenerate basic motif not likely to bind DNA.</text>
</comment>
<evidence type="ECO:0000250" key="1">
    <source>
        <dbReference type="UniProtKB" id="Q99NA2"/>
    </source>
</evidence>
<evidence type="ECO:0000255" key="2">
    <source>
        <dbReference type="PROSITE-ProRule" id="PRU00981"/>
    </source>
</evidence>
<evidence type="ECO:0000256" key="3">
    <source>
        <dbReference type="SAM" id="MobiDB-lite"/>
    </source>
</evidence>
<evidence type="ECO:0000269" key="4">
    <source>
    </source>
</evidence>
<evidence type="ECO:0000269" key="5">
    <source>
    </source>
</evidence>
<evidence type="ECO:0000269" key="6">
    <source>
    </source>
</evidence>
<evidence type="ECO:0000269" key="7">
    <source>
    </source>
</evidence>
<evidence type="ECO:0000269" key="8">
    <source>
    </source>
</evidence>
<evidence type="ECO:0000303" key="9">
    <source>
    </source>
</evidence>
<evidence type="ECO:0000303" key="10">
    <source>
    </source>
</evidence>
<evidence type="ECO:0000305" key="11"/>
<evidence type="ECO:0000312" key="12">
    <source>
        <dbReference type="EMBL" id="AAO85773.1"/>
    </source>
</evidence>
<evidence type="ECO:0000312" key="13">
    <source>
        <dbReference type="HGNC" id="HGNC:24126"/>
    </source>
</evidence>
<feature type="chain" id="PRO_0000323751" description="Transcription factor ATOH8">
    <location>
        <begin position="1"/>
        <end position="321"/>
    </location>
</feature>
<feature type="domain" description="bHLH" evidence="2">
    <location>
        <begin position="230"/>
        <end position="282"/>
    </location>
</feature>
<feature type="region of interest" description="Disordered" evidence="3">
    <location>
        <begin position="59"/>
        <end position="193"/>
    </location>
</feature>
<feature type="region of interest" description="Disordered" evidence="3">
    <location>
        <begin position="203"/>
        <end position="222"/>
    </location>
</feature>
<feature type="region of interest" description="Basic motif; degenerate" evidence="2">
    <location>
        <begin position="230"/>
        <end position="243"/>
    </location>
</feature>
<feature type="region of interest" description="Helix-loop-helix motif" evidence="2">
    <location>
        <begin position="244"/>
        <end position="282"/>
    </location>
</feature>
<feature type="compositionally biased region" description="Pro residues" evidence="3">
    <location>
        <begin position="70"/>
        <end position="85"/>
    </location>
</feature>
<feature type="compositionally biased region" description="Basic and acidic residues" evidence="3">
    <location>
        <begin position="93"/>
        <end position="109"/>
    </location>
</feature>
<feature type="compositionally biased region" description="Pro residues" evidence="3">
    <location>
        <begin position="121"/>
        <end position="132"/>
    </location>
</feature>
<feature type="compositionally biased region" description="Low complexity" evidence="3">
    <location>
        <begin position="133"/>
        <end position="143"/>
    </location>
</feature>
<feature type="compositionally biased region" description="Pro residues" evidence="3">
    <location>
        <begin position="160"/>
        <end position="186"/>
    </location>
</feature>
<feature type="splice variant" id="VSP_032118" description="In isoform 2." evidence="9">
    <original>E</original>
    <variation>SLIITQDTTARAAGLEAAGKTVQKVLCERGNSLMNNRTGRRKSWRLEFLFLRRRCFLLTFYLWFLFFSRFLLMLFLPLLTSVVTFLPPLRARRPPH</variation>
    <location>
        <position position="321"/>
    </location>
</feature>
<feature type="sequence variant" id="VAR_039582" description="In dbSNP:rs17851881." evidence="4 5 6">
    <original>L</original>
    <variation>P</variation>
    <location>
        <position position="150"/>
    </location>
</feature>
<gene>
    <name evidence="13" type="primary">ATOH8</name>
    <name type="synonym">ATH6</name>
    <name type="synonym">BHLHA21</name>
</gene>
<accession>Q96SQ7</accession>
<accession>Q504S2</accession>
<accession>Q659B0</accession>